<dbReference type="EMBL" id="CP001634">
    <property type="protein sequence ID" value="ACR80421.1"/>
    <property type="molecule type" value="Genomic_DNA"/>
</dbReference>
<dbReference type="RefSeq" id="WP_015869065.1">
    <property type="nucleotide sequence ID" value="NC_012785.1"/>
</dbReference>
<dbReference type="SMR" id="C5CFS3"/>
<dbReference type="STRING" id="521045.Kole_1735"/>
<dbReference type="KEGG" id="kol:Kole_1735"/>
<dbReference type="eggNOG" id="COG0632">
    <property type="taxonomic scope" value="Bacteria"/>
</dbReference>
<dbReference type="HOGENOM" id="CLU_087936_0_0_0"/>
<dbReference type="OrthoDB" id="5293449at2"/>
<dbReference type="Proteomes" id="UP000002382">
    <property type="component" value="Chromosome"/>
</dbReference>
<dbReference type="GO" id="GO:0005737">
    <property type="term" value="C:cytoplasm"/>
    <property type="evidence" value="ECO:0007669"/>
    <property type="project" value="UniProtKB-SubCell"/>
</dbReference>
<dbReference type="GO" id="GO:0009379">
    <property type="term" value="C:Holliday junction helicase complex"/>
    <property type="evidence" value="ECO:0007669"/>
    <property type="project" value="InterPro"/>
</dbReference>
<dbReference type="GO" id="GO:0048476">
    <property type="term" value="C:Holliday junction resolvase complex"/>
    <property type="evidence" value="ECO:0007669"/>
    <property type="project" value="UniProtKB-UniRule"/>
</dbReference>
<dbReference type="GO" id="GO:0005524">
    <property type="term" value="F:ATP binding"/>
    <property type="evidence" value="ECO:0007669"/>
    <property type="project" value="InterPro"/>
</dbReference>
<dbReference type="GO" id="GO:0000400">
    <property type="term" value="F:four-way junction DNA binding"/>
    <property type="evidence" value="ECO:0007669"/>
    <property type="project" value="UniProtKB-UniRule"/>
</dbReference>
<dbReference type="GO" id="GO:0009378">
    <property type="term" value="F:four-way junction helicase activity"/>
    <property type="evidence" value="ECO:0007669"/>
    <property type="project" value="InterPro"/>
</dbReference>
<dbReference type="GO" id="GO:0006310">
    <property type="term" value="P:DNA recombination"/>
    <property type="evidence" value="ECO:0007669"/>
    <property type="project" value="UniProtKB-UniRule"/>
</dbReference>
<dbReference type="GO" id="GO:0006281">
    <property type="term" value="P:DNA repair"/>
    <property type="evidence" value="ECO:0007669"/>
    <property type="project" value="UniProtKB-UniRule"/>
</dbReference>
<dbReference type="CDD" id="cd14332">
    <property type="entry name" value="UBA_RuvA_C"/>
    <property type="match status" value="1"/>
</dbReference>
<dbReference type="Gene3D" id="1.10.150.20">
    <property type="entry name" value="5' to 3' exonuclease, C-terminal subdomain"/>
    <property type="match status" value="1"/>
</dbReference>
<dbReference type="Gene3D" id="1.10.8.10">
    <property type="entry name" value="DNA helicase RuvA subunit, C-terminal domain"/>
    <property type="match status" value="1"/>
</dbReference>
<dbReference type="Gene3D" id="2.40.50.140">
    <property type="entry name" value="Nucleic acid-binding proteins"/>
    <property type="match status" value="1"/>
</dbReference>
<dbReference type="HAMAP" id="MF_00031">
    <property type="entry name" value="DNA_HJ_migration_RuvA"/>
    <property type="match status" value="1"/>
</dbReference>
<dbReference type="InterPro" id="IPR013849">
    <property type="entry name" value="DNA_helicase_Holl-junc_RuvA_I"/>
</dbReference>
<dbReference type="InterPro" id="IPR003583">
    <property type="entry name" value="Hlx-hairpin-Hlx_DNA-bd_motif"/>
</dbReference>
<dbReference type="InterPro" id="IPR012340">
    <property type="entry name" value="NA-bd_OB-fold"/>
</dbReference>
<dbReference type="InterPro" id="IPR000085">
    <property type="entry name" value="RuvA"/>
</dbReference>
<dbReference type="InterPro" id="IPR010994">
    <property type="entry name" value="RuvA_2-like"/>
</dbReference>
<dbReference type="InterPro" id="IPR011114">
    <property type="entry name" value="RuvA_C"/>
</dbReference>
<dbReference type="InterPro" id="IPR036267">
    <property type="entry name" value="RuvA_C_sf"/>
</dbReference>
<dbReference type="NCBIfam" id="TIGR00084">
    <property type="entry name" value="ruvA"/>
    <property type="match status" value="1"/>
</dbReference>
<dbReference type="Pfam" id="PF14520">
    <property type="entry name" value="HHH_5"/>
    <property type="match status" value="1"/>
</dbReference>
<dbReference type="Pfam" id="PF07499">
    <property type="entry name" value="RuvA_C"/>
    <property type="match status" value="1"/>
</dbReference>
<dbReference type="Pfam" id="PF01330">
    <property type="entry name" value="RuvA_N"/>
    <property type="match status" value="1"/>
</dbReference>
<dbReference type="SMART" id="SM00278">
    <property type="entry name" value="HhH1"/>
    <property type="match status" value="2"/>
</dbReference>
<dbReference type="SUPFAM" id="SSF46929">
    <property type="entry name" value="DNA helicase RuvA subunit, C-terminal domain"/>
    <property type="match status" value="1"/>
</dbReference>
<dbReference type="SUPFAM" id="SSF47781">
    <property type="entry name" value="RuvA domain 2-like"/>
    <property type="match status" value="1"/>
</dbReference>
<name>RUVA_KOSOT</name>
<accession>C5CFS3</accession>
<reference key="1">
    <citation type="submission" date="2009-06" db="EMBL/GenBank/DDBJ databases">
        <title>Complete sequence of Thermotogales bacterium TBF 19.5.1.</title>
        <authorList>
            <consortium name="US DOE Joint Genome Institute"/>
            <person name="Lucas S."/>
            <person name="Copeland A."/>
            <person name="Lapidus A."/>
            <person name="Glavina del Rio T."/>
            <person name="Tice H."/>
            <person name="Bruce D."/>
            <person name="Goodwin L."/>
            <person name="Pitluck S."/>
            <person name="Chertkov O."/>
            <person name="Brettin T."/>
            <person name="Detter J.C."/>
            <person name="Han C."/>
            <person name="Schmutz J."/>
            <person name="Larimer F."/>
            <person name="Land M."/>
            <person name="Hauser L."/>
            <person name="Kyrpides N."/>
            <person name="Ovchinnikova G."/>
            <person name="Noll K."/>
        </authorList>
    </citation>
    <scope>NUCLEOTIDE SEQUENCE [LARGE SCALE GENOMIC DNA]</scope>
    <source>
        <strain>ATCC BAA-1733 / DSM 21960 / TBF 19.5.1</strain>
    </source>
</reference>
<feature type="chain" id="PRO_1000201995" description="Holliday junction branch migration complex subunit RuvA">
    <location>
        <begin position="1"/>
        <end position="195"/>
    </location>
</feature>
<feature type="region of interest" description="Domain I" evidence="1">
    <location>
        <begin position="1"/>
        <end position="64"/>
    </location>
</feature>
<feature type="region of interest" description="Domain II" evidence="1">
    <location>
        <begin position="65"/>
        <end position="137"/>
    </location>
</feature>
<feature type="region of interest" description="Flexible linker" evidence="1">
    <location>
        <begin position="137"/>
        <end position="141"/>
    </location>
</feature>
<feature type="region of interest" description="Domain III" evidence="1">
    <location>
        <begin position="142"/>
        <end position="195"/>
    </location>
</feature>
<organism>
    <name type="scientific">Kosmotoga olearia (strain ATCC BAA-1733 / DSM 21960 / TBF 19.5.1)</name>
    <dbReference type="NCBI Taxonomy" id="521045"/>
    <lineage>
        <taxon>Bacteria</taxon>
        <taxon>Thermotogati</taxon>
        <taxon>Thermotogota</taxon>
        <taxon>Thermotogae</taxon>
        <taxon>Kosmotogales</taxon>
        <taxon>Kosmotogaceae</taxon>
        <taxon>Kosmotoga</taxon>
    </lineage>
</organism>
<proteinExistence type="inferred from homology"/>
<evidence type="ECO:0000255" key="1">
    <source>
        <dbReference type="HAMAP-Rule" id="MF_00031"/>
    </source>
</evidence>
<keyword id="KW-0963">Cytoplasm</keyword>
<keyword id="KW-0227">DNA damage</keyword>
<keyword id="KW-0233">DNA recombination</keyword>
<keyword id="KW-0234">DNA repair</keyword>
<keyword id="KW-0238">DNA-binding</keyword>
<keyword id="KW-1185">Reference proteome</keyword>
<gene>
    <name evidence="1" type="primary">ruvA</name>
    <name type="ordered locus">Kole_1735</name>
</gene>
<sequence>MIKGVEGEITEISGNEVTLKAGQFYLNILCSTNTIKELSLSAKVHLLTYLSFSADRAPEIYGFKDRAEYNVFLMLLKANKIGPKMALKILSATSPEMLQKMIASKDISGLSRLPGLGKKTAERLVSELYDLVKDYAVEFPKELSDVSEDAVGALTALGFDMTSAKLAVNEVLKEQTVENTQELVRKALRKLNKTR</sequence>
<protein>
    <recommendedName>
        <fullName evidence="1">Holliday junction branch migration complex subunit RuvA</fullName>
    </recommendedName>
</protein>
<comment type="function">
    <text evidence="1">The RuvA-RuvB-RuvC complex processes Holliday junction (HJ) DNA during genetic recombination and DNA repair, while the RuvA-RuvB complex plays an important role in the rescue of blocked DNA replication forks via replication fork reversal (RFR). RuvA specifically binds to HJ cruciform DNA, conferring on it an open structure. The RuvB hexamer acts as an ATP-dependent pump, pulling dsDNA into and through the RuvAB complex. HJ branch migration allows RuvC to scan DNA until it finds its consensus sequence, where it cleaves and resolves the cruciform DNA.</text>
</comment>
<comment type="subunit">
    <text evidence="1">Homotetramer. Forms an RuvA(8)-RuvB(12)-Holliday junction (HJ) complex. HJ DNA is sandwiched between 2 RuvA tetramers; dsDNA enters through RuvA and exits via RuvB. An RuvB hexamer assembles on each DNA strand where it exits the tetramer. Each RuvB hexamer is contacted by two RuvA subunits (via domain III) on 2 adjacent RuvB subunits; this complex drives branch migration. In the full resolvosome a probable DNA-RuvA(4)-RuvB(12)-RuvC(2) complex forms which resolves the HJ.</text>
</comment>
<comment type="subcellular location">
    <subcellularLocation>
        <location evidence="1">Cytoplasm</location>
    </subcellularLocation>
</comment>
<comment type="domain">
    <text evidence="1">Has three domains with a flexible linker between the domains II and III and assumes an 'L' shape. Domain III is highly mobile and contacts RuvB.</text>
</comment>
<comment type="similarity">
    <text evidence="1">Belongs to the RuvA family.</text>
</comment>